<gene>
    <name type="ordered locus">LACR_0404</name>
</gene>
<name>Y404_LACLS</name>
<organism>
    <name type="scientific">Lactococcus lactis subsp. cremoris (strain SK11)</name>
    <dbReference type="NCBI Taxonomy" id="272622"/>
    <lineage>
        <taxon>Bacteria</taxon>
        <taxon>Bacillati</taxon>
        <taxon>Bacillota</taxon>
        <taxon>Bacilli</taxon>
        <taxon>Lactobacillales</taxon>
        <taxon>Streptococcaceae</taxon>
        <taxon>Lactococcus</taxon>
        <taxon>Lactococcus cremoris subsp. cremoris</taxon>
    </lineage>
</organism>
<feature type="chain" id="PRO_1000065360" description="UPF0298 protein LACR_0404">
    <location>
        <begin position="1"/>
        <end position="103"/>
    </location>
</feature>
<sequence>MENIEKKEIRPLYIRERVAVYVYCYSYKGTRQLSRFGDIVYSSQKSHYSLLYVNNDEVADLLNKLKELRFVKKVRVGHIKELDQNFSEAFIQTNLEVKEELEH</sequence>
<protein>
    <recommendedName>
        <fullName evidence="1">UPF0298 protein LACR_0404</fullName>
    </recommendedName>
</protein>
<dbReference type="EMBL" id="CP000425">
    <property type="protein sequence ID" value="ABJ72011.1"/>
    <property type="molecule type" value="Genomic_DNA"/>
</dbReference>
<dbReference type="SMR" id="Q031W1"/>
<dbReference type="KEGG" id="llc:LACR_0404"/>
<dbReference type="HOGENOM" id="CLU_159890_1_0_9"/>
<dbReference type="Proteomes" id="UP000000240">
    <property type="component" value="Chromosome"/>
</dbReference>
<dbReference type="GO" id="GO:0005737">
    <property type="term" value="C:cytoplasm"/>
    <property type="evidence" value="ECO:0007669"/>
    <property type="project" value="UniProtKB-SubCell"/>
</dbReference>
<dbReference type="HAMAP" id="MF_01126">
    <property type="entry name" value="UPF0298"/>
    <property type="match status" value="1"/>
</dbReference>
<dbReference type="InterPro" id="IPR016979">
    <property type="entry name" value="DUF2129"/>
</dbReference>
<dbReference type="Pfam" id="PF09902">
    <property type="entry name" value="DUF2129"/>
    <property type="match status" value="1"/>
</dbReference>
<dbReference type="PIRSF" id="PIRSF031653">
    <property type="entry name" value="UCP031653"/>
    <property type="match status" value="1"/>
</dbReference>
<proteinExistence type="inferred from homology"/>
<comment type="subcellular location">
    <subcellularLocation>
        <location evidence="1">Cytoplasm</location>
    </subcellularLocation>
</comment>
<comment type="similarity">
    <text evidence="1">Belongs to the UPF0298 family.</text>
</comment>
<evidence type="ECO:0000255" key="1">
    <source>
        <dbReference type="HAMAP-Rule" id="MF_01126"/>
    </source>
</evidence>
<reference key="1">
    <citation type="journal article" date="2006" name="Proc. Natl. Acad. Sci. U.S.A.">
        <title>Comparative genomics of the lactic acid bacteria.</title>
        <authorList>
            <person name="Makarova K.S."/>
            <person name="Slesarev A."/>
            <person name="Wolf Y.I."/>
            <person name="Sorokin A."/>
            <person name="Mirkin B."/>
            <person name="Koonin E.V."/>
            <person name="Pavlov A."/>
            <person name="Pavlova N."/>
            <person name="Karamychev V."/>
            <person name="Polouchine N."/>
            <person name="Shakhova V."/>
            <person name="Grigoriev I."/>
            <person name="Lou Y."/>
            <person name="Rohksar D."/>
            <person name="Lucas S."/>
            <person name="Huang K."/>
            <person name="Goodstein D.M."/>
            <person name="Hawkins T."/>
            <person name="Plengvidhya V."/>
            <person name="Welker D."/>
            <person name="Hughes J."/>
            <person name="Goh Y."/>
            <person name="Benson A."/>
            <person name="Baldwin K."/>
            <person name="Lee J.-H."/>
            <person name="Diaz-Muniz I."/>
            <person name="Dosti B."/>
            <person name="Smeianov V."/>
            <person name="Wechter W."/>
            <person name="Barabote R."/>
            <person name="Lorca G."/>
            <person name="Altermann E."/>
            <person name="Barrangou R."/>
            <person name="Ganesan B."/>
            <person name="Xie Y."/>
            <person name="Rawsthorne H."/>
            <person name="Tamir D."/>
            <person name="Parker C."/>
            <person name="Breidt F."/>
            <person name="Broadbent J.R."/>
            <person name="Hutkins R."/>
            <person name="O'Sullivan D."/>
            <person name="Steele J."/>
            <person name="Unlu G."/>
            <person name="Saier M.H. Jr."/>
            <person name="Klaenhammer T."/>
            <person name="Richardson P."/>
            <person name="Kozyavkin S."/>
            <person name="Weimer B.C."/>
            <person name="Mills D.A."/>
        </authorList>
    </citation>
    <scope>NUCLEOTIDE SEQUENCE [LARGE SCALE GENOMIC DNA]</scope>
    <source>
        <strain>SK11</strain>
    </source>
</reference>
<keyword id="KW-0963">Cytoplasm</keyword>
<accession>Q031W1</accession>